<dbReference type="EMBL" id="X52875">
    <property type="protein sequence ID" value="CAA37055.1"/>
    <property type="molecule type" value="mRNA"/>
</dbReference>
<dbReference type="EMBL" id="X14572">
    <property type="protein sequence ID" value="CAA32710.1"/>
    <property type="status" value="ALT_SEQ"/>
    <property type="molecule type" value="mRNA"/>
</dbReference>
<dbReference type="CCDS" id="CCDS15888.1"/>
<dbReference type="PIR" id="I48410">
    <property type="entry name" value="S18038"/>
</dbReference>
<dbReference type="RefSeq" id="NP_033142.2">
    <property type="nucleotide sequence ID" value="NM_009116.2"/>
</dbReference>
<dbReference type="SMR" id="Q06348"/>
<dbReference type="BioGRID" id="203059">
    <property type="interactions" value="4"/>
</dbReference>
<dbReference type="FunCoup" id="Q06348">
    <property type="interactions" value="5"/>
</dbReference>
<dbReference type="IntAct" id="Q06348">
    <property type="interactions" value="1"/>
</dbReference>
<dbReference type="MINT" id="Q06348"/>
<dbReference type="STRING" id="10090.ENSMUSP00000040332"/>
<dbReference type="GlyGen" id="Q06348">
    <property type="glycosylation" value="1 site"/>
</dbReference>
<dbReference type="PhosphoSitePlus" id="Q06348"/>
<dbReference type="PaxDb" id="10090-ENSMUSP00000040332"/>
<dbReference type="ProteomicsDB" id="291569"/>
<dbReference type="DNASU" id="20204"/>
<dbReference type="GeneID" id="20204"/>
<dbReference type="KEGG" id="mmu:20204"/>
<dbReference type="AGR" id="MGI:98218"/>
<dbReference type="CTD" id="51450"/>
<dbReference type="MGI" id="MGI:98218">
    <property type="gene designation" value="Prrx2"/>
</dbReference>
<dbReference type="eggNOG" id="KOG0490">
    <property type="taxonomic scope" value="Eukaryota"/>
</dbReference>
<dbReference type="InParanoid" id="Q06348"/>
<dbReference type="OrthoDB" id="6159439at2759"/>
<dbReference type="PhylomeDB" id="Q06348"/>
<dbReference type="BioGRID-ORCS" id="20204">
    <property type="hits" value="1 hit in 80 CRISPR screens"/>
</dbReference>
<dbReference type="ChiTaRS" id="Prrx2">
    <property type="organism name" value="mouse"/>
</dbReference>
<dbReference type="PRO" id="PR:Q06348"/>
<dbReference type="Proteomes" id="UP000000589">
    <property type="component" value="Unplaced"/>
</dbReference>
<dbReference type="RNAct" id="Q06348">
    <property type="molecule type" value="protein"/>
</dbReference>
<dbReference type="GO" id="GO:0005634">
    <property type="term" value="C:nucleus"/>
    <property type="evidence" value="ECO:0007669"/>
    <property type="project" value="UniProtKB-SubCell"/>
</dbReference>
<dbReference type="GO" id="GO:0001228">
    <property type="term" value="F:DNA-binding transcription activator activity, RNA polymerase II-specific"/>
    <property type="evidence" value="ECO:0000315"/>
    <property type="project" value="NTNU_SB"/>
</dbReference>
<dbReference type="GO" id="GO:0071837">
    <property type="term" value="F:HMG box domain binding"/>
    <property type="evidence" value="ECO:0000353"/>
    <property type="project" value="UniProtKB"/>
</dbReference>
<dbReference type="GO" id="GO:0016251">
    <property type="term" value="F:RNA polymerase II general transcription initiation factor activity"/>
    <property type="evidence" value="ECO:0000314"/>
    <property type="project" value="MGI"/>
</dbReference>
<dbReference type="GO" id="GO:0000977">
    <property type="term" value="F:RNA polymerase II transcription regulatory region sequence-specific DNA binding"/>
    <property type="evidence" value="ECO:0000315"/>
    <property type="project" value="NTNU_SB"/>
</dbReference>
<dbReference type="GO" id="GO:0048844">
    <property type="term" value="P:artery morphogenesis"/>
    <property type="evidence" value="ECO:0000316"/>
    <property type="project" value="MGI"/>
</dbReference>
<dbReference type="GO" id="GO:0051216">
    <property type="term" value="P:cartilage development"/>
    <property type="evidence" value="ECO:0000316"/>
    <property type="project" value="MGI"/>
</dbReference>
<dbReference type="GO" id="GO:0048701">
    <property type="term" value="P:embryonic cranial skeleton morphogenesis"/>
    <property type="evidence" value="ECO:0000316"/>
    <property type="project" value="MGI"/>
</dbReference>
<dbReference type="GO" id="GO:0030326">
    <property type="term" value="P:embryonic limb morphogenesis"/>
    <property type="evidence" value="ECO:0000316"/>
    <property type="project" value="MGI"/>
</dbReference>
<dbReference type="GO" id="GO:0048704">
    <property type="term" value="P:embryonic skeletal system morphogenesis"/>
    <property type="evidence" value="ECO:0000316"/>
    <property type="project" value="MGI"/>
</dbReference>
<dbReference type="GO" id="GO:0042472">
    <property type="term" value="P:inner ear morphogenesis"/>
    <property type="evidence" value="ECO:0000316"/>
    <property type="project" value="MGI"/>
</dbReference>
<dbReference type="GO" id="GO:0010463">
    <property type="term" value="P:mesenchymal cell proliferation"/>
    <property type="evidence" value="ECO:0000316"/>
    <property type="project" value="MGI"/>
</dbReference>
<dbReference type="GO" id="GO:0042474">
    <property type="term" value="P:middle ear morphogenesis"/>
    <property type="evidence" value="ECO:0000316"/>
    <property type="project" value="MGI"/>
</dbReference>
<dbReference type="GO" id="GO:0002053">
    <property type="term" value="P:positive regulation of mesenchymal cell proliferation"/>
    <property type="evidence" value="ECO:0000316"/>
    <property type="project" value="MGI"/>
</dbReference>
<dbReference type="GO" id="GO:0045880">
    <property type="term" value="P:positive regulation of smoothened signaling pathway"/>
    <property type="evidence" value="ECO:0000316"/>
    <property type="project" value="MGI"/>
</dbReference>
<dbReference type="GO" id="GO:2000648">
    <property type="term" value="P:positive regulation of stem cell proliferation"/>
    <property type="evidence" value="ECO:0000316"/>
    <property type="project" value="MGI"/>
</dbReference>
<dbReference type="GO" id="GO:0045944">
    <property type="term" value="P:positive regulation of transcription by RNA polymerase II"/>
    <property type="evidence" value="ECO:0000315"/>
    <property type="project" value="NTNU_SB"/>
</dbReference>
<dbReference type="GO" id="GO:0007224">
    <property type="term" value="P:smoothened signaling pathway"/>
    <property type="evidence" value="ECO:0000316"/>
    <property type="project" value="MGI"/>
</dbReference>
<dbReference type="GO" id="GO:0072089">
    <property type="term" value="P:stem cell proliferation"/>
    <property type="evidence" value="ECO:0000316"/>
    <property type="project" value="MGI"/>
</dbReference>
<dbReference type="CDD" id="cd00086">
    <property type="entry name" value="homeodomain"/>
    <property type="match status" value="1"/>
</dbReference>
<dbReference type="FunFam" id="1.10.10.60:FF:000066">
    <property type="entry name" value="Paired mesoderm homeobox protein 1"/>
    <property type="match status" value="1"/>
</dbReference>
<dbReference type="Gene3D" id="1.10.10.60">
    <property type="entry name" value="Homeodomain-like"/>
    <property type="match status" value="1"/>
</dbReference>
<dbReference type="InterPro" id="IPR001356">
    <property type="entry name" value="HD"/>
</dbReference>
<dbReference type="InterPro" id="IPR017970">
    <property type="entry name" value="Homeobox_CS"/>
</dbReference>
<dbReference type="InterPro" id="IPR009057">
    <property type="entry name" value="Homeodomain-like_sf"/>
</dbReference>
<dbReference type="InterPro" id="IPR003654">
    <property type="entry name" value="OAR_dom"/>
</dbReference>
<dbReference type="InterPro" id="IPR043378">
    <property type="entry name" value="PRRX1/2"/>
</dbReference>
<dbReference type="PANTHER" id="PTHR46385">
    <property type="entry name" value="PAIRED MESODERM HOMEOBOX PROTEIN 1-RELATED"/>
    <property type="match status" value="1"/>
</dbReference>
<dbReference type="PANTHER" id="PTHR46385:SF3">
    <property type="entry name" value="PAIRED MESODERM HOMEOBOX PROTEIN 2"/>
    <property type="match status" value="1"/>
</dbReference>
<dbReference type="Pfam" id="PF00046">
    <property type="entry name" value="Homeodomain"/>
    <property type="match status" value="1"/>
</dbReference>
<dbReference type="Pfam" id="PF03826">
    <property type="entry name" value="OAR"/>
    <property type="match status" value="1"/>
</dbReference>
<dbReference type="SMART" id="SM00389">
    <property type="entry name" value="HOX"/>
    <property type="match status" value="1"/>
</dbReference>
<dbReference type="SUPFAM" id="SSF46689">
    <property type="entry name" value="Homeodomain-like"/>
    <property type="match status" value="1"/>
</dbReference>
<dbReference type="PROSITE" id="PS00027">
    <property type="entry name" value="HOMEOBOX_1"/>
    <property type="match status" value="1"/>
</dbReference>
<dbReference type="PROSITE" id="PS50071">
    <property type="entry name" value="HOMEOBOX_2"/>
    <property type="match status" value="1"/>
</dbReference>
<dbReference type="PROSITE" id="PS50803">
    <property type="entry name" value="OAR"/>
    <property type="match status" value="1"/>
</dbReference>
<gene>
    <name type="primary">Prrx2</name>
    <name type="synonym">Prx2</name>
    <name type="synonym">S8</name>
</gene>
<evidence type="ECO:0000255" key="1">
    <source>
        <dbReference type="PROSITE-ProRule" id="PRU00108"/>
    </source>
</evidence>
<evidence type="ECO:0000255" key="2">
    <source>
        <dbReference type="PROSITE-ProRule" id="PRU00138"/>
    </source>
</evidence>
<evidence type="ECO:0000256" key="3">
    <source>
        <dbReference type="SAM" id="MobiDB-lite"/>
    </source>
</evidence>
<evidence type="ECO:0000305" key="4"/>
<protein>
    <recommendedName>
        <fullName>Paired mesoderm homeobox protein 2</fullName>
        <shortName>PRX-2</shortName>
    </recommendedName>
    <alternativeName>
        <fullName>Homeobox protein S8</fullName>
    </alternativeName>
</protein>
<sequence length="247" mass="26427">MDSAAAAFALDPPAPGPGPPPAPGDCAQARKNFSVSHLLDLEEVAAAGRRAAGPVSGPAEARVGAAREPSGGSSGTEAAPQDGDCPSPGRGTKRKKKQRRNRTTFNSSQLQALERVFERTHYPDAFVREELARRVNLSEARVQVWFQNRRAKFRRNERAMLATRSASLLKSYGQEAAIEQPVAPRPTTMSPDYLSWPASSPYSSVPPYSPGGSSPATPGVNMANSIASLRLKAKEFSLHHSQVPTVN</sequence>
<proteinExistence type="evidence at transcript level"/>
<organism>
    <name type="scientific">Mus musculus</name>
    <name type="common">Mouse</name>
    <dbReference type="NCBI Taxonomy" id="10090"/>
    <lineage>
        <taxon>Eukaryota</taxon>
        <taxon>Metazoa</taxon>
        <taxon>Chordata</taxon>
        <taxon>Craniata</taxon>
        <taxon>Vertebrata</taxon>
        <taxon>Euteleostomi</taxon>
        <taxon>Mammalia</taxon>
        <taxon>Eutheria</taxon>
        <taxon>Euarchontoglires</taxon>
        <taxon>Glires</taxon>
        <taxon>Rodentia</taxon>
        <taxon>Myomorpha</taxon>
        <taxon>Muroidea</taxon>
        <taxon>Muridae</taxon>
        <taxon>Murinae</taxon>
        <taxon>Mus</taxon>
        <taxon>Mus</taxon>
    </lineage>
</organism>
<accession>Q06348</accession>
<accession>Q61651</accession>
<feature type="chain" id="PRO_0000049256" description="Paired mesoderm homeobox protein 2">
    <location>
        <begin position="1"/>
        <end position="247"/>
    </location>
</feature>
<feature type="DNA-binding region" description="Homeobox" evidence="1">
    <location>
        <begin position="98"/>
        <end position="157"/>
    </location>
</feature>
<feature type="region of interest" description="Disordered" evidence="3">
    <location>
        <begin position="1"/>
        <end position="31"/>
    </location>
</feature>
<feature type="region of interest" description="Disordered" evidence="3">
    <location>
        <begin position="49"/>
        <end position="107"/>
    </location>
</feature>
<feature type="short sequence motif" description="OAR" evidence="2">
    <location>
        <begin position="224"/>
        <end position="237"/>
    </location>
</feature>
<feature type="compositionally biased region" description="Low complexity" evidence="3">
    <location>
        <begin position="1"/>
        <end position="11"/>
    </location>
</feature>
<feature type="compositionally biased region" description="Pro residues" evidence="3">
    <location>
        <begin position="12"/>
        <end position="23"/>
    </location>
</feature>
<feature type="compositionally biased region" description="Low complexity" evidence="3">
    <location>
        <begin position="49"/>
        <end position="59"/>
    </location>
</feature>
<feature type="compositionally biased region" description="Basic residues" evidence="3">
    <location>
        <begin position="91"/>
        <end position="102"/>
    </location>
</feature>
<reference key="1">
    <citation type="submission" date="1998-03" db="EMBL/GenBank/DDBJ databases">
        <authorList>
            <person name="Meijlink F."/>
            <person name="ten Berge D."/>
            <person name="Brouwer A."/>
            <person name="Bleys R."/>
        </authorList>
    </citation>
    <scope>NUCLEOTIDE SEQUENCE [MRNA]</scope>
</reference>
<reference key="2">
    <citation type="journal article" date="1991" name="Mech. Dev.">
        <title>The mouse homeobox gene, S8, is expressed during embryogenesis predominantly in mesenchyme.</title>
        <authorList>
            <person name="Opstelten D.-J.E."/>
            <person name="Vogels R."/>
            <person name="Robert B."/>
            <person name="Kalkhoven E."/>
            <person name="Zwartkruis F."/>
            <person name="de Laaf L."/>
            <person name="Destree O.H."/>
            <person name="Deschamps J."/>
            <person name="Lawson K.A."/>
            <person name="Meijlink F."/>
        </authorList>
    </citation>
    <scope>NUCLEOTIDE SEQUENCE [MRNA] OF 84-247</scope>
    <source>
        <tissue>Spleen</tissue>
    </source>
</reference>
<reference key="3">
    <citation type="journal article" date="1988" name="EMBO J.">
        <title>Expression of multiple homeobox genes within diverse mammalian haemopoietic lineages.</title>
        <authorList>
            <person name="Kongsuwan K."/>
            <person name="Webb E."/>
            <person name="Housiaux P."/>
            <person name="Adams J.M."/>
        </authorList>
    </citation>
    <scope>NUCLEOTIDE SEQUENCE [MRNA] OF 133-157</scope>
</reference>
<keyword id="KW-0217">Developmental protein</keyword>
<keyword id="KW-0238">DNA-binding</keyword>
<keyword id="KW-0371">Homeobox</keyword>
<keyword id="KW-0539">Nucleus</keyword>
<keyword id="KW-1185">Reference proteome</keyword>
<name>PRRX2_MOUSE</name>
<comment type="subcellular location">
    <subcellularLocation>
        <location evidence="1 2">Nucleus</location>
    </subcellularLocation>
</comment>
<comment type="tissue specificity">
    <text>In the embryo, expressed in craniofacial mesenchyme, limb, heart, somites and sclerotomes. Absent from central and peripheral nervous systems, splanchnopleure and ectodermal derivatives.</text>
</comment>
<comment type="similarity">
    <text evidence="4">Belongs to the paired homeobox family.</text>
</comment>